<dbReference type="EMBL" id="AL513382">
    <property type="protein sequence ID" value="CAD01948.1"/>
    <property type="molecule type" value="Genomic_DNA"/>
</dbReference>
<dbReference type="EMBL" id="AE014613">
    <property type="protein sequence ID" value="AAO68937.1"/>
    <property type="molecule type" value="Genomic_DNA"/>
</dbReference>
<dbReference type="RefSeq" id="NP_456111.1">
    <property type="nucleotide sequence ID" value="NC_003198.1"/>
</dbReference>
<dbReference type="RefSeq" id="WP_001223304.1">
    <property type="nucleotide sequence ID" value="NZ_WSUK01000015.1"/>
</dbReference>
<dbReference type="SMR" id="P0A240"/>
<dbReference type="STRING" id="220341.gene:17585640"/>
<dbReference type="KEGG" id="stt:t1285"/>
<dbReference type="KEGG" id="sty:STY1703"/>
<dbReference type="PATRIC" id="fig|220341.7.peg.1713"/>
<dbReference type="eggNOG" id="ENOG5031T6C">
    <property type="taxonomic scope" value="Bacteria"/>
</dbReference>
<dbReference type="HOGENOM" id="CLU_162762_0_0_6"/>
<dbReference type="OMA" id="VNVPHHE"/>
<dbReference type="OrthoDB" id="6637013at2"/>
<dbReference type="PHI-base" id="PHI:625"/>
<dbReference type="Proteomes" id="UP000000541">
    <property type="component" value="Chromosome"/>
</dbReference>
<dbReference type="Proteomes" id="UP000002670">
    <property type="component" value="Chromosome"/>
</dbReference>
<dbReference type="GO" id="GO:0015031">
    <property type="term" value="P:protein transport"/>
    <property type="evidence" value="ECO:0007669"/>
    <property type="project" value="UniProtKB-KW"/>
</dbReference>
<dbReference type="NCBIfam" id="NF011878">
    <property type="entry name" value="PRK15351.1"/>
    <property type="match status" value="1"/>
</dbReference>
<gene>
    <name type="primary">ssaP</name>
    <name type="ordered locus">STY1703</name>
    <name type="ordered locus">t1285</name>
</gene>
<name>SSAP_SALTI</name>
<accession>P0A240</accession>
<accession>P74859</accession>
<reference key="1">
    <citation type="journal article" date="2001" name="Nature">
        <title>Complete genome sequence of a multiple drug resistant Salmonella enterica serovar Typhi CT18.</title>
        <authorList>
            <person name="Parkhill J."/>
            <person name="Dougan G."/>
            <person name="James K.D."/>
            <person name="Thomson N.R."/>
            <person name="Pickard D."/>
            <person name="Wain J."/>
            <person name="Churcher C.M."/>
            <person name="Mungall K.L."/>
            <person name="Bentley S.D."/>
            <person name="Holden M.T.G."/>
            <person name="Sebaihia M."/>
            <person name="Baker S."/>
            <person name="Basham D."/>
            <person name="Brooks K."/>
            <person name="Chillingworth T."/>
            <person name="Connerton P."/>
            <person name="Cronin A."/>
            <person name="Davis P."/>
            <person name="Davies R.M."/>
            <person name="Dowd L."/>
            <person name="White N."/>
            <person name="Farrar J."/>
            <person name="Feltwell T."/>
            <person name="Hamlin N."/>
            <person name="Haque A."/>
            <person name="Hien T.T."/>
            <person name="Holroyd S."/>
            <person name="Jagels K."/>
            <person name="Krogh A."/>
            <person name="Larsen T.S."/>
            <person name="Leather S."/>
            <person name="Moule S."/>
            <person name="O'Gaora P."/>
            <person name="Parry C."/>
            <person name="Quail M.A."/>
            <person name="Rutherford K.M."/>
            <person name="Simmonds M."/>
            <person name="Skelton J."/>
            <person name="Stevens K."/>
            <person name="Whitehead S."/>
            <person name="Barrell B.G."/>
        </authorList>
    </citation>
    <scope>NUCLEOTIDE SEQUENCE [LARGE SCALE GENOMIC DNA]</scope>
    <source>
        <strain>CT18</strain>
    </source>
</reference>
<reference key="2">
    <citation type="journal article" date="2003" name="J. Bacteriol.">
        <title>Comparative genomics of Salmonella enterica serovar Typhi strains Ty2 and CT18.</title>
        <authorList>
            <person name="Deng W."/>
            <person name="Liou S.-R."/>
            <person name="Plunkett G. III"/>
            <person name="Mayhew G.F."/>
            <person name="Rose D.J."/>
            <person name="Burland V."/>
            <person name="Kodoyianni V."/>
            <person name="Schwartz D.C."/>
            <person name="Blattner F.R."/>
        </authorList>
    </citation>
    <scope>NUCLEOTIDE SEQUENCE [LARGE SCALE GENOMIC DNA]</scope>
    <source>
        <strain>ATCC 700931 / Ty2</strain>
    </source>
</reference>
<sequence>MRITKVEGSLGLPCQSYQDDNEAEAERMDFEQLMHQALPIGENNPPAALNKNVVFTQRYRVSGGYLDGVECEVCESGGLIQLRINVPHHEIYRSMKALKQWLESQLLHMGYIISLEIFYVKNSE</sequence>
<feature type="chain" id="PRO_0000072207" description="Secretion system apparatus protein SsaP">
    <location>
        <begin position="1"/>
        <end position="124"/>
    </location>
</feature>
<protein>
    <recommendedName>
        <fullName>Secretion system apparatus protein SsaP</fullName>
    </recommendedName>
</protein>
<keyword id="KW-0653">Protein transport</keyword>
<keyword id="KW-0813">Transport</keyword>
<proteinExistence type="predicted"/>
<organism>
    <name type="scientific">Salmonella typhi</name>
    <dbReference type="NCBI Taxonomy" id="90370"/>
    <lineage>
        <taxon>Bacteria</taxon>
        <taxon>Pseudomonadati</taxon>
        <taxon>Pseudomonadota</taxon>
        <taxon>Gammaproteobacteria</taxon>
        <taxon>Enterobacterales</taxon>
        <taxon>Enterobacteriaceae</taxon>
        <taxon>Salmonella</taxon>
    </lineage>
</organism>